<evidence type="ECO:0000255" key="1">
    <source>
        <dbReference type="HAMAP-Rule" id="MF_01310"/>
    </source>
</evidence>
<evidence type="ECO:0000305" key="2"/>
<proteinExistence type="inferred from homology"/>
<gene>
    <name evidence="1" type="primary">rpsK</name>
    <name type="ordered locus">SaurJH9_2252</name>
</gene>
<reference key="1">
    <citation type="submission" date="2007-05" db="EMBL/GenBank/DDBJ databases">
        <title>Complete sequence of chromosome of Staphylococcus aureus subsp. aureus JH9.</title>
        <authorList>
            <consortium name="US DOE Joint Genome Institute"/>
            <person name="Copeland A."/>
            <person name="Lucas S."/>
            <person name="Lapidus A."/>
            <person name="Barry K."/>
            <person name="Detter J.C."/>
            <person name="Glavina del Rio T."/>
            <person name="Hammon N."/>
            <person name="Israni S."/>
            <person name="Pitluck S."/>
            <person name="Chain P."/>
            <person name="Malfatti S."/>
            <person name="Shin M."/>
            <person name="Vergez L."/>
            <person name="Schmutz J."/>
            <person name="Larimer F."/>
            <person name="Land M."/>
            <person name="Hauser L."/>
            <person name="Kyrpides N."/>
            <person name="Kim E."/>
            <person name="Tomasz A."/>
            <person name="Richardson P."/>
        </authorList>
    </citation>
    <scope>NUCLEOTIDE SEQUENCE [LARGE SCALE GENOMIC DNA]</scope>
    <source>
        <strain>JH9</strain>
    </source>
</reference>
<organism>
    <name type="scientific">Staphylococcus aureus (strain JH9)</name>
    <dbReference type="NCBI Taxonomy" id="359786"/>
    <lineage>
        <taxon>Bacteria</taxon>
        <taxon>Bacillati</taxon>
        <taxon>Bacillota</taxon>
        <taxon>Bacilli</taxon>
        <taxon>Bacillales</taxon>
        <taxon>Staphylococcaceae</taxon>
        <taxon>Staphylococcus</taxon>
    </lineage>
</organism>
<name>RS11_STAA9</name>
<feature type="chain" id="PRO_1000086215" description="Small ribosomal subunit protein uS11">
    <location>
        <begin position="1"/>
        <end position="129"/>
    </location>
</feature>
<protein>
    <recommendedName>
        <fullName evidence="1">Small ribosomal subunit protein uS11</fullName>
    </recommendedName>
    <alternativeName>
        <fullName evidence="2">30S ribosomal protein S11</fullName>
    </alternativeName>
</protein>
<sequence length="129" mass="13882">MARKQVSRKRRVKKNIENGVAHIRSTFNNTIVTITDEFGNALSWSSAGALGFKGSKKSTPFAAQMASETASKSAMEHGLKTVEVTVKGPGPGRESAIRALQSAGLEVTAIRDVTPVPHNGCRPPKRRRV</sequence>
<dbReference type="EMBL" id="CP000703">
    <property type="protein sequence ID" value="ABQ50032.1"/>
    <property type="molecule type" value="Genomic_DNA"/>
</dbReference>
<dbReference type="RefSeq" id="WP_000101625.1">
    <property type="nucleotide sequence ID" value="NC_009487.1"/>
</dbReference>
<dbReference type="SMR" id="A5IV09"/>
<dbReference type="GeneID" id="98346537"/>
<dbReference type="KEGG" id="saj:SaurJH9_2252"/>
<dbReference type="HOGENOM" id="CLU_072439_5_0_9"/>
<dbReference type="GO" id="GO:1990904">
    <property type="term" value="C:ribonucleoprotein complex"/>
    <property type="evidence" value="ECO:0007669"/>
    <property type="project" value="UniProtKB-KW"/>
</dbReference>
<dbReference type="GO" id="GO:0005840">
    <property type="term" value="C:ribosome"/>
    <property type="evidence" value="ECO:0007669"/>
    <property type="project" value="UniProtKB-KW"/>
</dbReference>
<dbReference type="GO" id="GO:0019843">
    <property type="term" value="F:rRNA binding"/>
    <property type="evidence" value="ECO:0007669"/>
    <property type="project" value="UniProtKB-UniRule"/>
</dbReference>
<dbReference type="GO" id="GO:0003735">
    <property type="term" value="F:structural constituent of ribosome"/>
    <property type="evidence" value="ECO:0007669"/>
    <property type="project" value="InterPro"/>
</dbReference>
<dbReference type="GO" id="GO:0006412">
    <property type="term" value="P:translation"/>
    <property type="evidence" value="ECO:0007669"/>
    <property type="project" value="UniProtKB-UniRule"/>
</dbReference>
<dbReference type="FunFam" id="3.30.420.80:FF:000001">
    <property type="entry name" value="30S ribosomal protein S11"/>
    <property type="match status" value="1"/>
</dbReference>
<dbReference type="Gene3D" id="3.30.420.80">
    <property type="entry name" value="Ribosomal protein S11"/>
    <property type="match status" value="1"/>
</dbReference>
<dbReference type="HAMAP" id="MF_01310">
    <property type="entry name" value="Ribosomal_uS11"/>
    <property type="match status" value="1"/>
</dbReference>
<dbReference type="InterPro" id="IPR001971">
    <property type="entry name" value="Ribosomal_uS11"/>
</dbReference>
<dbReference type="InterPro" id="IPR019981">
    <property type="entry name" value="Ribosomal_uS11_bac-type"/>
</dbReference>
<dbReference type="InterPro" id="IPR018102">
    <property type="entry name" value="Ribosomal_uS11_CS"/>
</dbReference>
<dbReference type="InterPro" id="IPR036967">
    <property type="entry name" value="Ribosomal_uS11_sf"/>
</dbReference>
<dbReference type="NCBIfam" id="NF003698">
    <property type="entry name" value="PRK05309.1"/>
    <property type="match status" value="1"/>
</dbReference>
<dbReference type="NCBIfam" id="TIGR03632">
    <property type="entry name" value="uS11_bact"/>
    <property type="match status" value="1"/>
</dbReference>
<dbReference type="PANTHER" id="PTHR11759">
    <property type="entry name" value="40S RIBOSOMAL PROTEIN S14/30S RIBOSOMAL PROTEIN S11"/>
    <property type="match status" value="1"/>
</dbReference>
<dbReference type="Pfam" id="PF00411">
    <property type="entry name" value="Ribosomal_S11"/>
    <property type="match status" value="1"/>
</dbReference>
<dbReference type="PIRSF" id="PIRSF002131">
    <property type="entry name" value="Ribosomal_S11"/>
    <property type="match status" value="1"/>
</dbReference>
<dbReference type="SUPFAM" id="SSF53137">
    <property type="entry name" value="Translational machinery components"/>
    <property type="match status" value="1"/>
</dbReference>
<dbReference type="PROSITE" id="PS00054">
    <property type="entry name" value="RIBOSOMAL_S11"/>
    <property type="match status" value="1"/>
</dbReference>
<keyword id="KW-0687">Ribonucleoprotein</keyword>
<keyword id="KW-0689">Ribosomal protein</keyword>
<keyword id="KW-0694">RNA-binding</keyword>
<keyword id="KW-0699">rRNA-binding</keyword>
<comment type="function">
    <text evidence="1">Located on the platform of the 30S subunit, it bridges several disparate RNA helices of the 16S rRNA. Forms part of the Shine-Dalgarno cleft in the 70S ribosome.</text>
</comment>
<comment type="subunit">
    <text evidence="1">Part of the 30S ribosomal subunit. Interacts with proteins S7 and S18. Binds to IF-3.</text>
</comment>
<comment type="similarity">
    <text evidence="1">Belongs to the universal ribosomal protein uS11 family.</text>
</comment>
<accession>A5IV09</accession>